<comment type="function">
    <text evidence="1">Required for coenzyme pyrroloquinoline quinone (PQQ) biosynthesis. PQQ is probably formed by cross-linking a specific glutamate to a specific tyrosine residue and excising these residues from the peptide.</text>
</comment>
<comment type="pathway">
    <text evidence="1">Cofactor biosynthesis; pyrroloquinoline quinone biosynthesis.</text>
</comment>
<comment type="similarity">
    <text evidence="1">Belongs to the PqqA family.</text>
</comment>
<protein>
    <recommendedName>
        <fullName evidence="1">Coenzyme PQQ synthesis protein A</fullName>
    </recommendedName>
    <alternativeName>
        <fullName evidence="1">Pyrroloquinoline quinone biosynthesis protein A</fullName>
    </alternativeName>
</protein>
<feature type="chain" id="PRO_1000061699" description="Coenzyme PQQ synthesis protein A">
    <location>
        <begin position="1"/>
        <end position="23"/>
    </location>
</feature>
<feature type="cross-link" description="Pyrroloquinoline quinone (Glu-Tyr)" evidence="1">
    <location>
        <begin position="15"/>
        <end position="19"/>
    </location>
</feature>
<organism>
    <name type="scientific">Pseudomonas aeruginosa (strain UCBPP-PA14)</name>
    <dbReference type="NCBI Taxonomy" id="208963"/>
    <lineage>
        <taxon>Bacteria</taxon>
        <taxon>Pseudomonadati</taxon>
        <taxon>Pseudomonadota</taxon>
        <taxon>Gammaproteobacteria</taxon>
        <taxon>Pseudomonadales</taxon>
        <taxon>Pseudomonadaceae</taxon>
        <taxon>Pseudomonas</taxon>
    </lineage>
</organism>
<keyword id="KW-0884">PQQ biosynthesis</keyword>
<proteinExistence type="inferred from homology"/>
<name>PQQA_PSEAB</name>
<reference key="1">
    <citation type="journal article" date="2006" name="Genome Biol.">
        <title>Genomic analysis reveals that Pseudomonas aeruginosa virulence is combinatorial.</title>
        <authorList>
            <person name="Lee D.G."/>
            <person name="Urbach J.M."/>
            <person name="Wu G."/>
            <person name="Liberati N.T."/>
            <person name="Feinbaum R.L."/>
            <person name="Miyata S."/>
            <person name="Diggins L.T."/>
            <person name="He J."/>
            <person name="Saucier M."/>
            <person name="Deziel E."/>
            <person name="Friedman L."/>
            <person name="Li L."/>
            <person name="Grills G."/>
            <person name="Montgomery K."/>
            <person name="Kucherlapati R."/>
            <person name="Rahme L.G."/>
            <person name="Ausubel F.M."/>
        </authorList>
    </citation>
    <scope>NUCLEOTIDE SEQUENCE [LARGE SCALE GENOMIC DNA]</scope>
    <source>
        <strain>UCBPP-PA14</strain>
    </source>
</reference>
<dbReference type="EMBL" id="CP000438">
    <property type="protein sequence ID" value="ABJ15699.1"/>
    <property type="molecule type" value="Genomic_DNA"/>
</dbReference>
<dbReference type="RefSeq" id="WP_003106462.1">
    <property type="nucleotide sequence ID" value="NZ_CP034244.1"/>
</dbReference>
<dbReference type="GeneID" id="79913893"/>
<dbReference type="KEGG" id="pau:PA14_38825"/>
<dbReference type="PseudoCAP" id="PA14_38825"/>
<dbReference type="HOGENOM" id="CLU_219131_1_0_6"/>
<dbReference type="BioCyc" id="PAER208963:G1G74-3263-MONOMER"/>
<dbReference type="UniPathway" id="UPA00539"/>
<dbReference type="Proteomes" id="UP000000653">
    <property type="component" value="Chromosome"/>
</dbReference>
<dbReference type="GO" id="GO:0018189">
    <property type="term" value="P:pyrroloquinoline quinone biosynthetic process"/>
    <property type="evidence" value="ECO:0007669"/>
    <property type="project" value="UniProtKB-UniRule"/>
</dbReference>
<dbReference type="HAMAP" id="MF_00656">
    <property type="entry name" value="PQQ_syn_PqqA"/>
    <property type="match status" value="1"/>
</dbReference>
<dbReference type="InterPro" id="IPR011725">
    <property type="entry name" value="PQQ_synth_PqqA"/>
</dbReference>
<dbReference type="NCBIfam" id="TIGR02107">
    <property type="entry name" value="PQQ_syn_pqqA"/>
    <property type="match status" value="1"/>
</dbReference>
<dbReference type="Pfam" id="PF08042">
    <property type="entry name" value="PqqA"/>
    <property type="match status" value="1"/>
</dbReference>
<evidence type="ECO:0000255" key="1">
    <source>
        <dbReference type="HAMAP-Rule" id="MF_00656"/>
    </source>
</evidence>
<gene>
    <name evidence="1" type="primary">pqqA</name>
    <name type="ordered locus">PA14_38825</name>
</gene>
<accession>Q02LD2</accession>
<sequence length="23" mass="2793">MWTKPSFTDLRLGFEVTLYFANR</sequence>